<evidence type="ECO:0000250" key="1"/>
<evidence type="ECO:0000305" key="2"/>
<accession>Q9P995</accession>
<sequence>MAKTNAVAGFNALNGVELNLFTNEELKAIHYATMEVLMNPGVQVSDPEARQIFKENGCEVDEETKVVKIPEYIVRKALQLAPSRFVLWGRDKKYNTVQECGGKVHWTCFGTGVKMCKYQDGKYVTVDSVEQDIADIAKLCDWAENIDYFSLPVSARDVAGQGAQDVHETFTPIVNTSKHYHHIDPVGENVEYYWDIVKAYYGGDEEEARKKPIFSMLLCPTSPLELSVNACQVIIKGARLGIPVNVLSMAMSGGSSPVYLAGTLVTHNAEVLSGIVLAQLTAPGSKVWYGSSTTTFDLKKGTAPVGSPELGLISAAVAKLAQFYGLPSFVAGSOSDAKIPDSQAGHEKTITTLLPALAGANTIYGAGMLELGMTFSMEQLVIDNDIISMVKKAMEGIPVSEETLSVESIQKVGIGNNFLALKQTRQLIDYPSSPMLIDRRMYGDWAASGSKDLAAVAHEKVVDVLKNHQVKPIDADILKDMQA</sequence>
<feature type="initiator methionine" description="Removed" evidence="1">
    <location>
        <position position="1"/>
    </location>
</feature>
<feature type="chain" id="PRO_0000216571" description="Trimethylamine methyltransferase MttB">
    <location>
        <begin position="2"/>
        <end position="483" status="greater than"/>
    </location>
</feature>
<feature type="non-standard amino acid" description="Pyrrolysine" evidence="1">
    <location>
        <position position="334"/>
    </location>
</feature>
<feature type="non-terminal residue">
    <location>
        <position position="483"/>
    </location>
</feature>
<comment type="function">
    <text evidence="1">Catalyzes the transfer of a methyl group from trimethylamine to the corrinoid cofactor of MttC.</text>
</comment>
<comment type="catalytic activity">
    <reaction>
        <text>Co(I)-[trimethylamine-specific corrinoid protein] + trimethylamine + H(+) = methyl-Co(III)-[trimethylamine-specific corrinoid protein] + dimethylamine</text>
        <dbReference type="Rhea" id="RHEA:39287"/>
        <dbReference type="Rhea" id="RHEA-COMP:11124"/>
        <dbReference type="Rhea" id="RHEA-COMP:11126"/>
        <dbReference type="ChEBI" id="CHEBI:15378"/>
        <dbReference type="ChEBI" id="CHEBI:58040"/>
        <dbReference type="ChEBI" id="CHEBI:58389"/>
        <dbReference type="ChEBI" id="CHEBI:85033"/>
        <dbReference type="ChEBI" id="CHEBI:85035"/>
        <dbReference type="EC" id="2.1.1.250"/>
    </reaction>
</comment>
<comment type="pathway">
    <text>One-carbon metabolism; methanogenesis from trimethylamine.</text>
</comment>
<comment type="subunit">
    <text evidence="1">Can form a complex with MttC.</text>
</comment>
<comment type="similarity">
    <text evidence="2">Belongs to the trimethylamine methyltransferase family.</text>
</comment>
<protein>
    <recommendedName>
        <fullName>Trimethylamine methyltransferase MttB</fullName>
        <shortName>TMA methyltransferase</shortName>
        <ecNumber>2.1.1.250</ecNumber>
    </recommendedName>
    <alternativeName>
        <fullName>Trimethylamine--corrinoid protein methyltransferase</fullName>
    </alternativeName>
</protein>
<organism>
    <name type="scientific">Methanosarcina thermophila</name>
    <dbReference type="NCBI Taxonomy" id="2210"/>
    <lineage>
        <taxon>Archaea</taxon>
        <taxon>Methanobacteriati</taxon>
        <taxon>Methanobacteriota</taxon>
        <taxon>Stenosarchaea group</taxon>
        <taxon>Methanomicrobia</taxon>
        <taxon>Methanosarcinales</taxon>
        <taxon>Methanosarcinaceae</taxon>
        <taxon>Methanosarcina</taxon>
    </lineage>
</organism>
<reference key="1">
    <citation type="journal article" date="2000" name="J. Bacteriol.">
        <title>The trimethylamine methyltransferase gene and multiple dimethylamine methyltransferase genes of Methanosarcina barkeri contain in-frame and read-through amber codons.</title>
        <authorList>
            <person name="Paul L."/>
            <person name="Ferguson D.J. Jr."/>
            <person name="Krzycki J.A."/>
        </authorList>
    </citation>
    <scope>NUCLEOTIDE SEQUENCE [GENOMIC DNA]</scope>
    <source>
        <strain>ATCC 43570 / DSM 1825 / OCM 12 / TM-1</strain>
    </source>
</reference>
<name>MTTB_METTE</name>
<proteinExistence type="inferred from homology"/>
<keyword id="KW-0484">Methanogenesis</keyword>
<keyword id="KW-0489">Methyltransferase</keyword>
<keyword id="KW-0669">Pyrrolysine</keyword>
<keyword id="KW-0808">Transferase</keyword>
<dbReference type="EC" id="2.1.1.250"/>
<dbReference type="EMBL" id="AF153452">
    <property type="protein sequence ID" value="AAD38789.1"/>
    <property type="molecule type" value="Genomic_DNA"/>
</dbReference>
<dbReference type="BRENDA" id="2.1.1.250">
    <property type="organism ID" value="3281"/>
</dbReference>
<dbReference type="UniPathway" id="UPA00645"/>
<dbReference type="GO" id="GO:0043834">
    <property type="term" value="F:trimethylamine methyltransferase activity"/>
    <property type="evidence" value="ECO:0007669"/>
    <property type="project" value="UniProtKB-EC"/>
</dbReference>
<dbReference type="GO" id="GO:0015948">
    <property type="term" value="P:methanogenesis"/>
    <property type="evidence" value="ECO:0007669"/>
    <property type="project" value="UniProtKB-KW"/>
</dbReference>
<dbReference type="GO" id="GO:0032259">
    <property type="term" value="P:methylation"/>
    <property type="evidence" value="ECO:0007669"/>
    <property type="project" value="UniProtKB-KW"/>
</dbReference>
<dbReference type="Gene3D" id="3.20.20.480">
    <property type="entry name" value="Trimethylamine methyltransferase-like"/>
    <property type="match status" value="1"/>
</dbReference>
<dbReference type="InterPro" id="IPR038601">
    <property type="entry name" value="MttB-like_sf"/>
</dbReference>
<dbReference type="InterPro" id="IPR012740">
    <property type="entry name" value="MttB_Methanosar"/>
</dbReference>
<dbReference type="InterPro" id="IPR010426">
    <property type="entry name" value="MTTB_MeTrfase"/>
</dbReference>
<dbReference type="NCBIfam" id="TIGR02369">
    <property type="entry name" value="trimeth_pyl"/>
    <property type="match status" value="1"/>
</dbReference>
<dbReference type="Pfam" id="PF06253">
    <property type="entry name" value="MTTB"/>
    <property type="match status" value="1"/>
</dbReference>
<dbReference type="PIRSF" id="PIRSF037567">
    <property type="entry name" value="MTTB_MeTrfase"/>
    <property type="match status" value="1"/>
</dbReference>
<gene>
    <name type="primary">mttB</name>
</gene>